<feature type="chain" id="PRO_0000107870" description="Phosphocarrier protein HPr">
    <location>
        <begin position="1"/>
        <end position="85"/>
    </location>
</feature>
<feature type="domain" description="HPr" evidence="2">
    <location>
        <begin position="1"/>
        <end position="85"/>
    </location>
</feature>
<feature type="active site" description="Pros-phosphohistidine intermediate" evidence="2">
    <location>
        <position position="15"/>
    </location>
</feature>
<reference key="1">
    <citation type="journal article" date="1982" name="J. Biol. Chem.">
        <title>Sugar transport by the bacterial phosphotransferase system. Primary structure and active site of a general phosphocarrier protein (HPr) from Salmonella typhimurium.</title>
        <authorList>
            <person name="Weigel N."/>
            <person name="Powers D.A."/>
            <person name="Roseman S."/>
        </authorList>
    </citation>
    <scope>PROTEIN SEQUENCE</scope>
</reference>
<reference key="2">
    <citation type="journal article" date="1984" name="J. Biol. Chem.">
        <title>The primary structure of Salmonella typhimurium HPr, a phosphocarrier protein of the phosphoenolpyruvate:glycose phosphotransferase system. A correction.</title>
        <authorList>
            <person name="Powers D.A."/>
            <person name="Roseman S."/>
        </authorList>
    </citation>
    <scope>SEQUENCE REVISION</scope>
</reference>
<reference key="3">
    <citation type="journal article" date="1988" name="J. Bacteriol.">
        <title>DNA sequences of the cysK regions of Salmonella typhimurium and Escherichia coli and linkage of the cysK regions to ptsH.</title>
        <authorList>
            <person name="Byrne C.R."/>
            <person name="Monroe R.S."/>
            <person name="Ward K.A."/>
            <person name="Kredich N.M."/>
        </authorList>
    </citation>
    <scope>NUCLEOTIDE SEQUENCE [GENOMIC DNA]</scope>
    <source>
        <strain>LT2</strain>
    </source>
</reference>
<reference key="4">
    <citation type="journal article" date="1989" name="Mol. Microbiol.">
        <title>Partial nucleotide sequence of the pts operon in Salmonella typhimurium: comparative analyses in five bacterial genera.</title>
        <authorList>
            <person name="Schnierow B.J."/>
            <person name="Yamada M."/>
            <person name="Saier M.H. Jr."/>
        </authorList>
    </citation>
    <scope>NUCLEOTIDE SEQUENCE [GENOMIC DNA]</scope>
    <source>
        <strain>LT2</strain>
    </source>
</reference>
<reference key="5">
    <citation type="journal article" date="2001" name="Nature">
        <title>Complete genome sequence of Salmonella enterica serovar Typhimurium LT2.</title>
        <authorList>
            <person name="McClelland M."/>
            <person name="Sanderson K.E."/>
            <person name="Spieth J."/>
            <person name="Clifton S.W."/>
            <person name="Latreille P."/>
            <person name="Courtney L."/>
            <person name="Porwollik S."/>
            <person name="Ali J."/>
            <person name="Dante M."/>
            <person name="Du F."/>
            <person name="Hou S."/>
            <person name="Layman D."/>
            <person name="Leonard S."/>
            <person name="Nguyen C."/>
            <person name="Scott K."/>
            <person name="Holmes A."/>
            <person name="Grewal N."/>
            <person name="Mulvaney E."/>
            <person name="Ryan E."/>
            <person name="Sun H."/>
            <person name="Florea L."/>
            <person name="Miller W."/>
            <person name="Stoneking T."/>
            <person name="Nhan M."/>
            <person name="Waterston R."/>
            <person name="Wilson R.K."/>
        </authorList>
    </citation>
    <scope>NUCLEOTIDE SEQUENCE [LARGE SCALE GENOMIC DNA]</scope>
    <source>
        <strain>LT2 / SGSC1412 / ATCC 700720</strain>
    </source>
</reference>
<protein>
    <recommendedName>
        <fullName>Phosphocarrier protein HPr</fullName>
    </recommendedName>
    <alternativeName>
        <fullName>Histidine-containing protein</fullName>
    </alternativeName>
</protein>
<comment type="function">
    <text evidence="1">General (non sugar-specific) component of the phosphoenolpyruvate-dependent sugar phosphotransferase system (sugar PTS). This major carbohydrate active-transport system catalyzes the phosphorylation of incoming sugar substrates concomitantly with their translocation across the cell membrane. The phosphoryl group from phosphoenolpyruvate (PEP) is transferred to the phosphoryl carrier protein HPr by enzyme I. Phospho-HPr then transfers it to the PTS EIIA domain.</text>
</comment>
<comment type="subcellular location">
    <subcellularLocation>
        <location evidence="1">Cytoplasm</location>
    </subcellularLocation>
</comment>
<comment type="similarity">
    <text evidence="3">Belongs to the HPr family.</text>
</comment>
<accession>P0AA07</accession>
<accession>P05525</accession>
<accession>P07006</accession>
<evidence type="ECO:0000250" key="1"/>
<evidence type="ECO:0000255" key="2">
    <source>
        <dbReference type="PROSITE-ProRule" id="PRU00681"/>
    </source>
</evidence>
<evidence type="ECO:0000305" key="3"/>
<keyword id="KW-0963">Cytoplasm</keyword>
<keyword id="KW-0903">Direct protein sequencing</keyword>
<keyword id="KW-0598">Phosphotransferase system</keyword>
<keyword id="KW-1185">Reference proteome</keyword>
<keyword id="KW-0762">Sugar transport</keyword>
<keyword id="KW-0813">Transport</keyword>
<organism>
    <name type="scientific">Salmonella typhimurium (strain LT2 / SGSC1412 / ATCC 700720)</name>
    <dbReference type="NCBI Taxonomy" id="99287"/>
    <lineage>
        <taxon>Bacteria</taxon>
        <taxon>Pseudomonadati</taxon>
        <taxon>Pseudomonadota</taxon>
        <taxon>Gammaproteobacteria</taxon>
        <taxon>Enterobacterales</taxon>
        <taxon>Enterobacteriaceae</taxon>
        <taxon>Salmonella</taxon>
    </lineage>
</organism>
<name>PTHP_SALTY</name>
<dbReference type="EMBL" id="M21450">
    <property type="protein sequence ID" value="AAA27052.1"/>
    <property type="molecule type" value="Genomic_DNA"/>
</dbReference>
<dbReference type="EMBL" id="X14737">
    <property type="protein sequence ID" value="CAA32865.1"/>
    <property type="molecule type" value="Genomic_DNA"/>
</dbReference>
<dbReference type="EMBL" id="AE006468">
    <property type="protein sequence ID" value="AAL21325.1"/>
    <property type="molecule type" value="Genomic_DNA"/>
</dbReference>
<dbReference type="PIR" id="C28181">
    <property type="entry name" value="WQEBPH"/>
</dbReference>
<dbReference type="RefSeq" id="NP_461366.1">
    <property type="nucleotide sequence ID" value="NC_003197.2"/>
</dbReference>
<dbReference type="RefSeq" id="WP_000487600.1">
    <property type="nucleotide sequence ID" value="NC_003197.2"/>
</dbReference>
<dbReference type="BMRB" id="P0AA07"/>
<dbReference type="SMR" id="P0AA07"/>
<dbReference type="STRING" id="99287.STM2431"/>
<dbReference type="PaxDb" id="99287-STM2431"/>
<dbReference type="ABCD" id="P0AA07">
    <property type="antibodies" value="1 sequenced antibody"/>
</dbReference>
<dbReference type="GeneID" id="1253953"/>
<dbReference type="GeneID" id="97602767"/>
<dbReference type="KEGG" id="stm:STM2431"/>
<dbReference type="PATRIC" id="fig|99287.12.peg.2569"/>
<dbReference type="HOGENOM" id="CLU_136230_2_3_6"/>
<dbReference type="OMA" id="APHGIHT"/>
<dbReference type="PhylomeDB" id="P0AA07"/>
<dbReference type="BioCyc" id="SENT99287:STM2431-MONOMER"/>
<dbReference type="PRO" id="PR:P0AA07"/>
<dbReference type="Proteomes" id="UP000001014">
    <property type="component" value="Chromosome"/>
</dbReference>
<dbReference type="GO" id="GO:0005737">
    <property type="term" value="C:cytoplasm"/>
    <property type="evidence" value="ECO:0007669"/>
    <property type="project" value="UniProtKB-SubCell"/>
</dbReference>
<dbReference type="GO" id="GO:0009401">
    <property type="term" value="P:phosphoenolpyruvate-dependent sugar phosphotransferase system"/>
    <property type="evidence" value="ECO:0000318"/>
    <property type="project" value="GO_Central"/>
</dbReference>
<dbReference type="CDD" id="cd00367">
    <property type="entry name" value="PTS-HPr_like"/>
    <property type="match status" value="1"/>
</dbReference>
<dbReference type="FunFam" id="3.30.1340.10:FF:000001">
    <property type="entry name" value="Phosphocarrier, HPr family"/>
    <property type="match status" value="1"/>
</dbReference>
<dbReference type="Gene3D" id="3.30.1340.10">
    <property type="entry name" value="HPr-like"/>
    <property type="match status" value="1"/>
</dbReference>
<dbReference type="InterPro" id="IPR050399">
    <property type="entry name" value="HPr"/>
</dbReference>
<dbReference type="InterPro" id="IPR000032">
    <property type="entry name" value="HPr-like"/>
</dbReference>
<dbReference type="InterPro" id="IPR035895">
    <property type="entry name" value="HPr-like_sf"/>
</dbReference>
<dbReference type="InterPro" id="IPR001020">
    <property type="entry name" value="PTS_HPr_His_P_site"/>
</dbReference>
<dbReference type="InterPro" id="IPR002114">
    <property type="entry name" value="PTS_HPr_Ser_P_site"/>
</dbReference>
<dbReference type="NCBIfam" id="NF008104">
    <property type="entry name" value="PRK10850.1"/>
    <property type="match status" value="1"/>
</dbReference>
<dbReference type="NCBIfam" id="TIGR01003">
    <property type="entry name" value="PTS_HPr_family"/>
    <property type="match status" value="1"/>
</dbReference>
<dbReference type="PANTHER" id="PTHR33705">
    <property type="entry name" value="PHOSPHOCARRIER PROTEIN HPR"/>
    <property type="match status" value="1"/>
</dbReference>
<dbReference type="PANTHER" id="PTHR33705:SF1">
    <property type="entry name" value="PHOSPHOCARRIER PROTEIN HPR"/>
    <property type="match status" value="1"/>
</dbReference>
<dbReference type="Pfam" id="PF00381">
    <property type="entry name" value="PTS-HPr"/>
    <property type="match status" value="1"/>
</dbReference>
<dbReference type="PRINTS" id="PR00107">
    <property type="entry name" value="PHOSPHOCPHPR"/>
</dbReference>
<dbReference type="SUPFAM" id="SSF55594">
    <property type="entry name" value="HPr-like"/>
    <property type="match status" value="1"/>
</dbReference>
<dbReference type="PROSITE" id="PS51350">
    <property type="entry name" value="PTS_HPR_DOM"/>
    <property type="match status" value="1"/>
</dbReference>
<dbReference type="PROSITE" id="PS00369">
    <property type="entry name" value="PTS_HPR_HIS"/>
    <property type="match status" value="1"/>
</dbReference>
<dbReference type="PROSITE" id="PS00589">
    <property type="entry name" value="PTS_HPR_SER"/>
    <property type="match status" value="1"/>
</dbReference>
<proteinExistence type="evidence at protein level"/>
<gene>
    <name type="primary">ptsH</name>
    <name type="synonym">hpr</name>
    <name type="ordered locus">STM2431</name>
</gene>
<sequence length="85" mass="9119">MFQQEVTITAPNGLHTRPAAQFVKEAKGFTSEITVTSNGKSASAKSLFKLQTLGLTQGTVVTISAEGEDEQKAVEHLVKLMAELE</sequence>